<sequence>MPSSTSEDITACTFIGGGVMARCMIDGLLDTYNNSVEIRVTARRSAHVGELATRYPTLVVSQGNISPILWDEPWHKLGKTPAAHVVLICTQPWATSDVCQDIRYVYSNYGFDPEPTFVTMCPGITTAQLEGWLPKGASVVRTMPNTPVAVRQGATALFANKVVTAQQASAVADIFRAVSPQISFIKQEDGIDIAASISGSSPAYVFKLLAILVEAGVSHGLAPDVAGALVKQSCLGAAMQALQDKRSLQSLIADVCVPGGSTEKAMQRLDEGEFSAVVAAAVEKSLDANRAMGKE</sequence>
<proteinExistence type="evidence at protein level"/>
<reference key="1">
    <citation type="journal article" date="2013" name="PLoS Pathog.">
        <title>Deciphering the cryptic genome: genome-wide analyses of the rice pathogen Fusarium fujikuroi reveal complex regulation of secondary metabolism and novel metabolites.</title>
        <authorList>
            <person name="Wiemann P."/>
            <person name="Sieber C.M.K."/>
            <person name="von Bargen K.W."/>
            <person name="Studt L."/>
            <person name="Niehaus E.-M."/>
            <person name="Espino J.J."/>
            <person name="Huss K."/>
            <person name="Michielse C.B."/>
            <person name="Albermann S."/>
            <person name="Wagner D."/>
            <person name="Bergner S.V."/>
            <person name="Connolly L.R."/>
            <person name="Fischer A."/>
            <person name="Reuter G."/>
            <person name="Kleigrewe K."/>
            <person name="Bald T."/>
            <person name="Wingfield B.D."/>
            <person name="Ophir R."/>
            <person name="Freeman S."/>
            <person name="Hippler M."/>
            <person name="Smith K.M."/>
            <person name="Brown D.W."/>
            <person name="Proctor R.H."/>
            <person name="Muensterkoetter M."/>
            <person name="Freitag M."/>
            <person name="Humpf H.-U."/>
            <person name="Gueldener U."/>
            <person name="Tudzynski B."/>
        </authorList>
    </citation>
    <scope>NUCLEOTIDE SEQUENCE [LARGE SCALE GENOMIC DNA]</scope>
    <source>
        <strain>CBS 195.34 / IMI 58289 / NRRL A-6831</strain>
    </source>
</reference>
<reference key="2">
    <citation type="journal article" date="2013" name="J. Nat. Prod.">
        <title>Structure elucidation and antimalarial activity of apicidin F: an apicidin-like compound produced by Fusarium fujikuroi.</title>
        <authorList>
            <person name="von Bargen K.W."/>
            <person name="Niehaus E.M."/>
            <person name="Bergander K."/>
            <person name="Brun R."/>
            <person name="Tudzynski B."/>
            <person name="Humpf H.U."/>
        </authorList>
    </citation>
    <scope>FUNCTION</scope>
    <scope>BIOTECHNOLOGY</scope>
</reference>
<reference key="3">
    <citation type="journal article" date="2014" name="PLoS ONE">
        <title>Apicidin F: characterization and genetic manipulation of a new secondary metabolite gene cluster in the rice pathogen Fusarium fujikuroi.</title>
        <authorList>
            <person name="Niehaus E.M."/>
            <person name="Janevska S."/>
            <person name="von Bargen K.W."/>
            <person name="Sieber C.M."/>
            <person name="Harrer H."/>
            <person name="Humpf H.U."/>
            <person name="Tudzynski B."/>
        </authorList>
    </citation>
    <scope>FUNCTION</scope>
    <scope>DISRUPTION PHENOTYPE</scope>
    <scope>INDUCTION</scope>
</reference>
<accession>S0DLN5</accession>
<keyword id="KW-0560">Oxidoreductase</keyword>
<keyword id="KW-1185">Reference proteome</keyword>
<dbReference type="EC" id="1.5.1.-" evidence="5"/>
<dbReference type="EMBL" id="HF679023">
    <property type="protein sequence ID" value="CCT63351.1"/>
    <property type="molecule type" value="Genomic_DNA"/>
</dbReference>
<dbReference type="SMR" id="S0DLN5"/>
<dbReference type="STRING" id="1279085.S0DLN5"/>
<dbReference type="EnsemblFungi" id="CCT63351">
    <property type="protein sequence ID" value="CCT63351"/>
    <property type="gene ID" value="FFUJ_00013"/>
</dbReference>
<dbReference type="VEuPathDB" id="FungiDB:FFUJ_00013"/>
<dbReference type="HOGENOM" id="CLU_042344_0_1_1"/>
<dbReference type="BioCyc" id="MetaCyc:MONOMER-19328"/>
<dbReference type="Proteomes" id="UP000016800">
    <property type="component" value="Chromosome 1"/>
</dbReference>
<dbReference type="GO" id="GO:0004735">
    <property type="term" value="F:pyrroline-5-carboxylate reductase activity"/>
    <property type="evidence" value="ECO:0007669"/>
    <property type="project" value="InterPro"/>
</dbReference>
<dbReference type="GO" id="GO:0055129">
    <property type="term" value="P:L-proline biosynthetic process"/>
    <property type="evidence" value="ECO:0007669"/>
    <property type="project" value="TreeGrafter"/>
</dbReference>
<dbReference type="Gene3D" id="3.40.50.720">
    <property type="entry name" value="NAD(P)-binding Rossmann-like Domain"/>
    <property type="match status" value="1"/>
</dbReference>
<dbReference type="Gene3D" id="1.10.3730.10">
    <property type="entry name" value="ProC C-terminal domain-like"/>
    <property type="match status" value="1"/>
</dbReference>
<dbReference type="HAMAP" id="MF_01925">
    <property type="entry name" value="P5C_reductase"/>
    <property type="match status" value="1"/>
</dbReference>
<dbReference type="InterPro" id="IPR008927">
    <property type="entry name" value="6-PGluconate_DH-like_C_sf"/>
</dbReference>
<dbReference type="InterPro" id="IPR036291">
    <property type="entry name" value="NAD(P)-bd_dom_sf"/>
</dbReference>
<dbReference type="InterPro" id="IPR029036">
    <property type="entry name" value="P5CR_dimer"/>
</dbReference>
<dbReference type="InterPro" id="IPR000304">
    <property type="entry name" value="Pyrroline-COOH_reductase"/>
</dbReference>
<dbReference type="PANTHER" id="PTHR11645">
    <property type="entry name" value="PYRROLINE-5-CARBOXYLATE REDUCTASE"/>
    <property type="match status" value="1"/>
</dbReference>
<dbReference type="PANTHER" id="PTHR11645:SF0">
    <property type="entry name" value="PYRROLINE-5-CARBOXYLATE REDUCTASE 3"/>
    <property type="match status" value="1"/>
</dbReference>
<dbReference type="Pfam" id="PF14748">
    <property type="entry name" value="P5CR_dimer"/>
    <property type="match status" value="1"/>
</dbReference>
<dbReference type="PIRSF" id="PIRSF000193">
    <property type="entry name" value="Pyrrol-5-carb_rd"/>
    <property type="match status" value="1"/>
</dbReference>
<dbReference type="SUPFAM" id="SSF48179">
    <property type="entry name" value="6-phosphogluconate dehydrogenase C-terminal domain-like"/>
    <property type="match status" value="1"/>
</dbReference>
<dbReference type="SUPFAM" id="SSF51735">
    <property type="entry name" value="NAD(P)-binding Rossmann-fold domains"/>
    <property type="match status" value="1"/>
</dbReference>
<feature type="chain" id="PRO_0000437158" description="Delta-1-pyrroline-5-carboxylate reductase apf3">
    <location>
        <begin position="1"/>
        <end position="295"/>
    </location>
</feature>
<organism>
    <name type="scientific">Gibberella fujikuroi (strain CBS 195.34 / IMI 58289 / NRRL A-6831)</name>
    <name type="common">Bakanae and foot rot disease fungus</name>
    <name type="synonym">Fusarium fujikuroi</name>
    <dbReference type="NCBI Taxonomy" id="1279085"/>
    <lineage>
        <taxon>Eukaryota</taxon>
        <taxon>Fungi</taxon>
        <taxon>Dikarya</taxon>
        <taxon>Ascomycota</taxon>
        <taxon>Pezizomycotina</taxon>
        <taxon>Sordariomycetes</taxon>
        <taxon>Hypocreomycetidae</taxon>
        <taxon>Hypocreales</taxon>
        <taxon>Nectriaceae</taxon>
        <taxon>Fusarium</taxon>
        <taxon>Fusarium fujikuroi species complex</taxon>
    </lineage>
</organism>
<name>APF3_GIBF5</name>
<comment type="function">
    <text evidence="1 2">Delta-1-pyrroline-5-carboxylate reductase; part of the gene cluster that mediates the biosynthesis of the cyclic tetrapeptide apicidin F (APF) (PubMed:25058475). The non-ribosomal peptide synthetase apf1 incorporates four different amino acids to produce apicidin F: L-phenylalanine, D-pipecolic acid (D-pip), N-methoxy-L-tryptophan and L-2-aminooctanedioic acid (PubMed:25058475). L-Phenylalanine is the only proteinogenic amino acid directly used by apf1 (PubMed:24195442, PubMed:25058475). The 3 other apf1 substrates are non-proteinogenic and have to be modified by other enzymes of the cluster (PubMed:25058475). Lysine is converted to delta-1-pyrroline-5-carboxylate (P5C) which is reduced to L-pipecolic acid (L-pip) by apf3 (PubMed:25058475). L-pip is epimerized to D-pip, probably by apf1 activity, prior to incorporation (PubMed:25058475). L-Tryptophan is N-oxidyzed by one of the cytochrome P450 monooxygenases (apf7 or apf8), and further methylated at the hydroxy group by the O-methyltransferase apf6 to yield N-methoxy-L-tryptophan (PubMed:25058475). The synthesis of the fourth apf1 substrate is more complex (PubMed:25058475). The fatty acid synthase apf5 is involved in the synthesis of the octanoic acid backbone of L-2-aminooctanedioic acid by fixing one acetyl-CoA unit and three malonyl-CoA units (PubMed:25058475). Then one of the cytochrome P450 monooxygenases (apf7 or apf8) may oxidize this backbone to 2-oxooctanoic acid (PubMed:25058475). The aminotransferase apf4 is predicted to catalyze the exchange of the keto group with an amino group (PubMed:25058475). The next step would be the oxidation of 2-aminooctanoic acid by one of the cytochrome P450 monooxygenases (apf7 or apf8). The last step is the oxidation of 2-amino-8-hydroxyoctanoic acid to 2-aminooctanedioic acid is catalyzed by the FAD-dependent monooxygenase apf9 (PubMed:25058475).</text>
</comment>
<comment type="pathway">
    <text evidence="2">Secondary metabolite biosynthesis.</text>
</comment>
<comment type="induction">
    <text evidence="2">Expression is positively regulated by the apicidin F cluster-specific transcription factor apf2 that binds to the eight-base-pair motif 5'-TGACGTGA-3' called the 'Api-box' that is found in all promoters of the apicidin F cluster except in the promoter region of apf2 itself (PubMed:25058475).</text>
</comment>
<comment type="disruption phenotype">
    <text evidence="2">Decreases 100-fold the apicidin F production. Leads to the incorporation of proline instead of D-pipecolic acid resulting in the production of apicidin J (PubMed:25058475).</text>
</comment>
<comment type="biotechnology">
    <text evidence="1">Apicidin F, like the other known apicidins, is a cyclic tetrapeptides with anti-malarial properties via histone deacetylase inhibitory activity (PubMed:24195442).</text>
</comment>
<comment type="similarity">
    <text evidence="4">Belongs to the pyrroline-5-carboxylate reductase family.</text>
</comment>
<evidence type="ECO:0000269" key="1">
    <source>
    </source>
</evidence>
<evidence type="ECO:0000269" key="2">
    <source>
    </source>
</evidence>
<evidence type="ECO:0000303" key="3">
    <source>
    </source>
</evidence>
<evidence type="ECO:0000305" key="4"/>
<evidence type="ECO:0000305" key="5">
    <source>
    </source>
</evidence>
<protein>
    <recommendedName>
        <fullName evidence="3">Delta-1-pyrroline-5-carboxylate reductase apf3</fullName>
        <ecNumber evidence="5">1.5.1.-</ecNumber>
    </recommendedName>
    <alternativeName>
        <fullName evidence="3">Apicidin F synthesis protein 3</fullName>
    </alternativeName>
</protein>
<gene>
    <name evidence="3" type="primary">apf3</name>
    <name type="ORF">FFUJ_00013</name>
</gene>